<feature type="chain" id="PRO_0000111406" description="Small ribosomal subunit protein uS9">
    <location>
        <begin position="1"/>
        <end position="130"/>
    </location>
</feature>
<feature type="region of interest" description="Disordered" evidence="2">
    <location>
        <begin position="99"/>
        <end position="130"/>
    </location>
</feature>
<feature type="compositionally biased region" description="Basic residues" evidence="2">
    <location>
        <begin position="111"/>
        <end position="130"/>
    </location>
</feature>
<sequence>MAQVEYRGTGRRKNSVARVRLVPGEGNITVNNRDVREYLPFESLILDLNQPFDVTETKGNYDVLVNVHGGGFTGQAQAIRHGIARALLEADPEYRGSLKRAGLLTRDPRMKERKKPGLKAARRSPQFSKR</sequence>
<gene>
    <name evidence="1" type="primary">rpsI</name>
    <name type="ordered locus">SA2016</name>
</gene>
<proteinExistence type="evidence at protein level"/>
<accession>P66646</accession>
<accession>Q99S52</accession>
<reference key="1">
    <citation type="journal article" date="2001" name="Lancet">
        <title>Whole genome sequencing of meticillin-resistant Staphylococcus aureus.</title>
        <authorList>
            <person name="Kuroda M."/>
            <person name="Ohta T."/>
            <person name="Uchiyama I."/>
            <person name="Baba T."/>
            <person name="Yuzawa H."/>
            <person name="Kobayashi I."/>
            <person name="Cui L."/>
            <person name="Oguchi A."/>
            <person name="Aoki K."/>
            <person name="Nagai Y."/>
            <person name="Lian J.-Q."/>
            <person name="Ito T."/>
            <person name="Kanamori M."/>
            <person name="Matsumaru H."/>
            <person name="Maruyama A."/>
            <person name="Murakami H."/>
            <person name="Hosoyama A."/>
            <person name="Mizutani-Ui Y."/>
            <person name="Takahashi N.K."/>
            <person name="Sawano T."/>
            <person name="Inoue R."/>
            <person name="Kaito C."/>
            <person name="Sekimizu K."/>
            <person name="Hirakawa H."/>
            <person name="Kuhara S."/>
            <person name="Goto S."/>
            <person name="Yabuzaki J."/>
            <person name="Kanehisa M."/>
            <person name="Yamashita A."/>
            <person name="Oshima K."/>
            <person name="Furuya K."/>
            <person name="Yoshino C."/>
            <person name="Shiba T."/>
            <person name="Hattori M."/>
            <person name="Ogasawara N."/>
            <person name="Hayashi H."/>
            <person name="Hiramatsu K."/>
        </authorList>
    </citation>
    <scope>NUCLEOTIDE SEQUENCE [LARGE SCALE GENOMIC DNA]</scope>
    <source>
        <strain>N315</strain>
    </source>
</reference>
<reference key="2">
    <citation type="submission" date="2005-11" db="UniProtKB">
        <title>Shotgun proteomic analysis of total protein extract of S. aureus S30 versus N315.</title>
        <authorList>
            <person name="Stenz L."/>
        </authorList>
    </citation>
    <scope>IDENTIFICATION BY MASS SPECTROMETRY</scope>
</reference>
<reference key="3">
    <citation type="submission" date="2007-10" db="UniProtKB">
        <title>Shotgun proteomic analysis of total and membrane protein extracts of S. aureus strain N315.</title>
        <authorList>
            <person name="Vaezzadeh A.R."/>
            <person name="Deshusses J."/>
            <person name="Lescuyer P."/>
            <person name="Hochstrasser D.F."/>
        </authorList>
    </citation>
    <scope>IDENTIFICATION BY MASS SPECTROMETRY [LARGE SCALE ANALYSIS]</scope>
    <source>
        <strain>N315</strain>
    </source>
</reference>
<keyword id="KW-0687">Ribonucleoprotein</keyword>
<keyword id="KW-0689">Ribosomal protein</keyword>
<name>RS9_STAAN</name>
<organism>
    <name type="scientific">Staphylococcus aureus (strain N315)</name>
    <dbReference type="NCBI Taxonomy" id="158879"/>
    <lineage>
        <taxon>Bacteria</taxon>
        <taxon>Bacillati</taxon>
        <taxon>Bacillota</taxon>
        <taxon>Bacilli</taxon>
        <taxon>Bacillales</taxon>
        <taxon>Staphylococcaceae</taxon>
        <taxon>Staphylococcus</taxon>
    </lineage>
</organism>
<protein>
    <recommendedName>
        <fullName evidence="1">Small ribosomal subunit protein uS9</fullName>
    </recommendedName>
    <alternativeName>
        <fullName evidence="3">30S ribosomal protein S9</fullName>
    </alternativeName>
</protein>
<dbReference type="EMBL" id="BA000018">
    <property type="protein sequence ID" value="BAB43309.1"/>
    <property type="molecule type" value="Genomic_DNA"/>
</dbReference>
<dbReference type="PIR" id="D90018">
    <property type="entry name" value="D90018"/>
</dbReference>
<dbReference type="RefSeq" id="WP_001790547.1">
    <property type="nucleotide sequence ID" value="NC_002745.2"/>
</dbReference>
<dbReference type="SMR" id="P66646"/>
<dbReference type="EnsemblBacteria" id="BAB43309">
    <property type="protein sequence ID" value="BAB43309"/>
    <property type="gene ID" value="BAB43309"/>
</dbReference>
<dbReference type="GeneID" id="98346529"/>
<dbReference type="KEGG" id="sau:SA2016"/>
<dbReference type="HOGENOM" id="CLU_046483_2_1_9"/>
<dbReference type="GO" id="GO:0022627">
    <property type="term" value="C:cytosolic small ribosomal subunit"/>
    <property type="evidence" value="ECO:0007669"/>
    <property type="project" value="TreeGrafter"/>
</dbReference>
<dbReference type="GO" id="GO:0003723">
    <property type="term" value="F:RNA binding"/>
    <property type="evidence" value="ECO:0007669"/>
    <property type="project" value="TreeGrafter"/>
</dbReference>
<dbReference type="GO" id="GO:0003735">
    <property type="term" value="F:structural constituent of ribosome"/>
    <property type="evidence" value="ECO:0007669"/>
    <property type="project" value="InterPro"/>
</dbReference>
<dbReference type="GO" id="GO:0006412">
    <property type="term" value="P:translation"/>
    <property type="evidence" value="ECO:0007669"/>
    <property type="project" value="UniProtKB-UniRule"/>
</dbReference>
<dbReference type="FunFam" id="3.30.230.10:FF:000001">
    <property type="entry name" value="30S ribosomal protein S9"/>
    <property type="match status" value="1"/>
</dbReference>
<dbReference type="Gene3D" id="3.30.230.10">
    <property type="match status" value="1"/>
</dbReference>
<dbReference type="HAMAP" id="MF_00532_B">
    <property type="entry name" value="Ribosomal_uS9_B"/>
    <property type="match status" value="1"/>
</dbReference>
<dbReference type="InterPro" id="IPR020568">
    <property type="entry name" value="Ribosomal_Su5_D2-typ_SF"/>
</dbReference>
<dbReference type="InterPro" id="IPR000754">
    <property type="entry name" value="Ribosomal_uS9"/>
</dbReference>
<dbReference type="InterPro" id="IPR023035">
    <property type="entry name" value="Ribosomal_uS9_bac/plastid"/>
</dbReference>
<dbReference type="InterPro" id="IPR020574">
    <property type="entry name" value="Ribosomal_uS9_CS"/>
</dbReference>
<dbReference type="InterPro" id="IPR014721">
    <property type="entry name" value="Ribsml_uS5_D2-typ_fold_subgr"/>
</dbReference>
<dbReference type="NCBIfam" id="NF001099">
    <property type="entry name" value="PRK00132.1"/>
    <property type="match status" value="1"/>
</dbReference>
<dbReference type="PANTHER" id="PTHR21569">
    <property type="entry name" value="RIBOSOMAL PROTEIN S9"/>
    <property type="match status" value="1"/>
</dbReference>
<dbReference type="PANTHER" id="PTHR21569:SF1">
    <property type="entry name" value="SMALL RIBOSOMAL SUBUNIT PROTEIN US9M"/>
    <property type="match status" value="1"/>
</dbReference>
<dbReference type="Pfam" id="PF00380">
    <property type="entry name" value="Ribosomal_S9"/>
    <property type="match status" value="1"/>
</dbReference>
<dbReference type="SUPFAM" id="SSF54211">
    <property type="entry name" value="Ribosomal protein S5 domain 2-like"/>
    <property type="match status" value="1"/>
</dbReference>
<dbReference type="PROSITE" id="PS00360">
    <property type="entry name" value="RIBOSOMAL_S9"/>
    <property type="match status" value="1"/>
</dbReference>
<evidence type="ECO:0000255" key="1">
    <source>
        <dbReference type="HAMAP-Rule" id="MF_00532"/>
    </source>
</evidence>
<evidence type="ECO:0000256" key="2">
    <source>
        <dbReference type="SAM" id="MobiDB-lite"/>
    </source>
</evidence>
<evidence type="ECO:0000305" key="3"/>
<comment type="similarity">
    <text evidence="1">Belongs to the universal ribosomal protein uS9 family.</text>
</comment>